<sequence length="170" mass="18128">MSGAGRPEYTVDAQGLTLGVVATRWNAEVVEPMLERALAAAEQCKVAETTVVRVAGAVEIPVVAQELARTHDAVVALGAVIRGDTPHFDYVCQSFTHGLTEVALRTEVPVGNGVLTCDTLEQARDRAGLPDSKEDKGWEAAVAALDTALVLRKLRDARGQRDGRPRPTTT</sequence>
<evidence type="ECO:0000255" key="1">
    <source>
        <dbReference type="HAMAP-Rule" id="MF_00178"/>
    </source>
</evidence>
<accession>Q47QZ8</accession>
<keyword id="KW-0686">Riboflavin biosynthesis</keyword>
<keyword id="KW-0808">Transferase</keyword>
<organism>
    <name type="scientific">Thermobifida fusca (strain YX)</name>
    <dbReference type="NCBI Taxonomy" id="269800"/>
    <lineage>
        <taxon>Bacteria</taxon>
        <taxon>Bacillati</taxon>
        <taxon>Actinomycetota</taxon>
        <taxon>Actinomycetes</taxon>
        <taxon>Streptosporangiales</taxon>
        <taxon>Nocardiopsidaceae</taxon>
        <taxon>Thermobifida</taxon>
    </lineage>
</organism>
<name>RISB_THEFY</name>
<gene>
    <name evidence="1" type="primary">ribH</name>
    <name type="ordered locus">Tfu_1081</name>
</gene>
<comment type="function">
    <text evidence="1">Catalyzes the formation of 6,7-dimethyl-8-ribityllumazine by condensation of 5-amino-6-(D-ribitylamino)uracil with 3,4-dihydroxy-2-butanone 4-phosphate. This is the penultimate step in the biosynthesis of riboflavin.</text>
</comment>
<comment type="catalytic activity">
    <reaction evidence="1">
        <text>(2S)-2-hydroxy-3-oxobutyl phosphate + 5-amino-6-(D-ribitylamino)uracil = 6,7-dimethyl-8-(1-D-ribityl)lumazine + phosphate + 2 H2O + H(+)</text>
        <dbReference type="Rhea" id="RHEA:26152"/>
        <dbReference type="ChEBI" id="CHEBI:15377"/>
        <dbReference type="ChEBI" id="CHEBI:15378"/>
        <dbReference type="ChEBI" id="CHEBI:15934"/>
        <dbReference type="ChEBI" id="CHEBI:43474"/>
        <dbReference type="ChEBI" id="CHEBI:58201"/>
        <dbReference type="ChEBI" id="CHEBI:58830"/>
        <dbReference type="EC" id="2.5.1.78"/>
    </reaction>
</comment>
<comment type="pathway">
    <text evidence="1">Cofactor biosynthesis; riboflavin biosynthesis; riboflavin from 2-hydroxy-3-oxobutyl phosphate and 5-amino-6-(D-ribitylamino)uracil: step 1/2.</text>
</comment>
<comment type="similarity">
    <text evidence="1">Belongs to the DMRL synthase family.</text>
</comment>
<dbReference type="EC" id="2.5.1.78" evidence="1"/>
<dbReference type="EMBL" id="CP000088">
    <property type="protein sequence ID" value="AAZ55119.1"/>
    <property type="molecule type" value="Genomic_DNA"/>
</dbReference>
<dbReference type="RefSeq" id="WP_011291528.1">
    <property type="nucleotide sequence ID" value="NC_007333.1"/>
</dbReference>
<dbReference type="SMR" id="Q47QZ8"/>
<dbReference type="STRING" id="269800.Tfu_1081"/>
<dbReference type="KEGG" id="tfu:Tfu_1081"/>
<dbReference type="eggNOG" id="COG0054">
    <property type="taxonomic scope" value="Bacteria"/>
</dbReference>
<dbReference type="HOGENOM" id="CLU_089358_1_2_11"/>
<dbReference type="OrthoDB" id="9809709at2"/>
<dbReference type="UniPathway" id="UPA00275">
    <property type="reaction ID" value="UER00404"/>
</dbReference>
<dbReference type="GO" id="GO:0005829">
    <property type="term" value="C:cytosol"/>
    <property type="evidence" value="ECO:0007669"/>
    <property type="project" value="TreeGrafter"/>
</dbReference>
<dbReference type="GO" id="GO:0009349">
    <property type="term" value="C:riboflavin synthase complex"/>
    <property type="evidence" value="ECO:0007669"/>
    <property type="project" value="InterPro"/>
</dbReference>
<dbReference type="GO" id="GO:0000906">
    <property type="term" value="F:6,7-dimethyl-8-ribityllumazine synthase activity"/>
    <property type="evidence" value="ECO:0007669"/>
    <property type="project" value="UniProtKB-UniRule"/>
</dbReference>
<dbReference type="GO" id="GO:0009231">
    <property type="term" value="P:riboflavin biosynthetic process"/>
    <property type="evidence" value="ECO:0007669"/>
    <property type="project" value="UniProtKB-UniRule"/>
</dbReference>
<dbReference type="CDD" id="cd09209">
    <property type="entry name" value="Lumazine_synthase-I"/>
    <property type="match status" value="1"/>
</dbReference>
<dbReference type="Gene3D" id="3.40.50.960">
    <property type="entry name" value="Lumazine/riboflavin synthase"/>
    <property type="match status" value="1"/>
</dbReference>
<dbReference type="HAMAP" id="MF_00178">
    <property type="entry name" value="Lumazine_synth"/>
    <property type="match status" value="1"/>
</dbReference>
<dbReference type="InterPro" id="IPR034964">
    <property type="entry name" value="LS"/>
</dbReference>
<dbReference type="InterPro" id="IPR002180">
    <property type="entry name" value="LS/RS"/>
</dbReference>
<dbReference type="InterPro" id="IPR036467">
    <property type="entry name" value="LS/RS_sf"/>
</dbReference>
<dbReference type="NCBIfam" id="TIGR00114">
    <property type="entry name" value="lumazine-synth"/>
    <property type="match status" value="1"/>
</dbReference>
<dbReference type="PANTHER" id="PTHR21058:SF0">
    <property type="entry name" value="6,7-DIMETHYL-8-RIBITYLLUMAZINE SYNTHASE"/>
    <property type="match status" value="1"/>
</dbReference>
<dbReference type="PANTHER" id="PTHR21058">
    <property type="entry name" value="6,7-DIMETHYL-8-RIBITYLLUMAZINE SYNTHASE DMRL SYNTHASE LUMAZINE SYNTHASE"/>
    <property type="match status" value="1"/>
</dbReference>
<dbReference type="Pfam" id="PF00885">
    <property type="entry name" value="DMRL_synthase"/>
    <property type="match status" value="1"/>
</dbReference>
<dbReference type="SUPFAM" id="SSF52121">
    <property type="entry name" value="Lumazine synthase"/>
    <property type="match status" value="1"/>
</dbReference>
<protein>
    <recommendedName>
        <fullName evidence="1">6,7-dimethyl-8-ribityllumazine synthase</fullName>
        <shortName evidence="1">DMRL synthase</shortName>
        <shortName evidence="1">LS</shortName>
        <shortName evidence="1">Lumazine synthase</shortName>
        <ecNumber evidence="1">2.5.1.78</ecNumber>
    </recommendedName>
</protein>
<proteinExistence type="inferred from homology"/>
<feature type="chain" id="PRO_1000040538" description="6,7-dimethyl-8-ribityllumazine synthase">
    <location>
        <begin position="1"/>
        <end position="170"/>
    </location>
</feature>
<feature type="active site" description="Proton donor" evidence="1">
    <location>
        <position position="87"/>
    </location>
</feature>
<feature type="binding site" evidence="1">
    <location>
        <position position="25"/>
    </location>
    <ligand>
        <name>5-amino-6-(D-ribitylamino)uracil</name>
        <dbReference type="ChEBI" id="CHEBI:15934"/>
    </ligand>
</feature>
<feature type="binding site" evidence="1">
    <location>
        <begin position="57"/>
        <end position="59"/>
    </location>
    <ligand>
        <name>5-amino-6-(D-ribitylamino)uracil</name>
        <dbReference type="ChEBI" id="CHEBI:15934"/>
    </ligand>
</feature>
<feature type="binding site" evidence="1">
    <location>
        <begin position="79"/>
        <end position="81"/>
    </location>
    <ligand>
        <name>5-amino-6-(D-ribitylamino)uracil</name>
        <dbReference type="ChEBI" id="CHEBI:15934"/>
    </ligand>
</feature>
<feature type="binding site" evidence="1">
    <location>
        <begin position="84"/>
        <end position="85"/>
    </location>
    <ligand>
        <name>(2S)-2-hydroxy-3-oxobutyl phosphate</name>
        <dbReference type="ChEBI" id="CHEBI:58830"/>
    </ligand>
</feature>
<feature type="binding site" evidence="1">
    <location>
        <position position="112"/>
    </location>
    <ligand>
        <name>5-amino-6-(D-ribitylamino)uracil</name>
        <dbReference type="ChEBI" id="CHEBI:15934"/>
    </ligand>
</feature>
<feature type="binding site" evidence="1">
    <location>
        <position position="126"/>
    </location>
    <ligand>
        <name>(2S)-2-hydroxy-3-oxobutyl phosphate</name>
        <dbReference type="ChEBI" id="CHEBI:58830"/>
    </ligand>
</feature>
<reference key="1">
    <citation type="journal article" date="2007" name="J. Bacteriol.">
        <title>Genome sequence and analysis of the soil cellulolytic actinomycete Thermobifida fusca YX.</title>
        <authorList>
            <person name="Lykidis A."/>
            <person name="Mavromatis K."/>
            <person name="Ivanova N."/>
            <person name="Anderson I."/>
            <person name="Land M."/>
            <person name="DiBartolo G."/>
            <person name="Martinez M."/>
            <person name="Lapidus A."/>
            <person name="Lucas S."/>
            <person name="Copeland A."/>
            <person name="Richardson P."/>
            <person name="Wilson D.B."/>
            <person name="Kyrpides N."/>
        </authorList>
    </citation>
    <scope>NUCLEOTIDE SEQUENCE [LARGE SCALE GENOMIC DNA]</scope>
    <source>
        <strain>YX</strain>
    </source>
</reference>